<dbReference type="EMBL" id="AB020571">
    <property type="protein sequence ID" value="BAA87860.1"/>
    <property type="molecule type" value="mRNA"/>
</dbReference>
<dbReference type="SMR" id="Q9PVW8"/>
<dbReference type="GO" id="GO:0005576">
    <property type="term" value="C:extracellular region"/>
    <property type="evidence" value="ECO:0007669"/>
    <property type="project" value="UniProtKB-SubCell"/>
</dbReference>
<dbReference type="GO" id="GO:0030246">
    <property type="term" value="F:carbohydrate binding"/>
    <property type="evidence" value="ECO:0007669"/>
    <property type="project" value="UniProtKB-KW"/>
</dbReference>
<dbReference type="CDD" id="cd22833">
    <property type="entry name" value="Gal_Rha_Lectin_CSL1-2_RBL_SML_rpt1"/>
    <property type="match status" value="1"/>
</dbReference>
<dbReference type="CDD" id="cd22836">
    <property type="entry name" value="Gal_Rha_Lectin_RBL_rpt2"/>
    <property type="match status" value="1"/>
</dbReference>
<dbReference type="CDD" id="cd22837">
    <property type="entry name" value="Gal_Rha_Lectin_RBL_rpt3"/>
    <property type="match status" value="1"/>
</dbReference>
<dbReference type="FunFam" id="2.60.120.740:FF:000001">
    <property type="entry name" value="Adhesion G protein-coupled receptor L2"/>
    <property type="match status" value="1"/>
</dbReference>
<dbReference type="Gene3D" id="2.60.120.740">
    <property type="match status" value="3"/>
</dbReference>
<dbReference type="InterPro" id="IPR000922">
    <property type="entry name" value="Lectin_gal-bd_dom"/>
</dbReference>
<dbReference type="InterPro" id="IPR043159">
    <property type="entry name" value="Lectin_gal-bd_sf"/>
</dbReference>
<dbReference type="PANTHER" id="PTHR46780">
    <property type="entry name" value="PROTEIN EVA-1"/>
    <property type="match status" value="1"/>
</dbReference>
<dbReference type="Pfam" id="PF02140">
    <property type="entry name" value="SUEL_Lectin"/>
    <property type="match status" value="3"/>
</dbReference>
<dbReference type="PROSITE" id="PS50228">
    <property type="entry name" value="SUEL_LECTIN"/>
    <property type="match status" value="2"/>
</dbReference>
<proteinExistence type="evidence at protein level"/>
<name>SAL_SILAS</name>
<comment type="function">
    <text>Lectin that binds L-rhamnose. Also binds monosaccharides possessing steric similarity to the hydroxyl group orientation at C2 and C4 of the pyranose ring structure of L-rhamnose, such as L-mannose and L-lyxose.</text>
</comment>
<comment type="subunit">
    <text evidence="4">Homotrimer.</text>
</comment>
<comment type="subcellular location">
    <subcellularLocation>
        <location>Secreted</location>
    </subcellularLocation>
</comment>
<comment type="tissue specificity">
    <text>Expressed in eggs, but not in liver.</text>
</comment>
<organism>
    <name type="scientific">Silurus asotus</name>
    <name type="common">Amur catfish</name>
    <name type="synonym">Parasilurus asotus</name>
    <dbReference type="NCBI Taxonomy" id="30991"/>
    <lineage>
        <taxon>Eukaryota</taxon>
        <taxon>Metazoa</taxon>
        <taxon>Chordata</taxon>
        <taxon>Craniata</taxon>
        <taxon>Vertebrata</taxon>
        <taxon>Euteleostomi</taxon>
        <taxon>Actinopterygii</taxon>
        <taxon>Neopterygii</taxon>
        <taxon>Teleostei</taxon>
        <taxon>Ostariophysi</taxon>
        <taxon>Siluriformes</taxon>
        <taxon>Siluridae</taxon>
        <taxon>Silurus</taxon>
    </lineage>
</organism>
<accession>Q9PVW8</accession>
<protein>
    <recommendedName>
        <fullName>Rhamnose-binding lectin</fullName>
    </recommendedName>
    <alternativeName>
        <fullName>RBL</fullName>
    </alternativeName>
    <alternativeName>
        <fullName>Roe lectin</fullName>
    </alternativeName>
    <alternativeName>
        <fullName>SAL</fullName>
    </alternativeName>
</protein>
<keyword id="KW-0903">Direct protein sequencing</keyword>
<keyword id="KW-0325">Glycoprotein</keyword>
<keyword id="KW-0430">Lectin</keyword>
<keyword id="KW-0677">Repeat</keyword>
<keyword id="KW-0964">Secreted</keyword>
<keyword id="KW-0732">Signal</keyword>
<reference key="1">
    <citation type="journal article" date="1999" name="Biochim. Biophys. Acta">
        <title>Tandem repeat structure of rhamnose-binding lectin from catfish (Silurus asotus) eggs.</title>
        <authorList>
            <person name="Hosono M."/>
            <person name="Ishikawa K."/>
            <person name="Mineki R."/>
            <person name="Murayama K."/>
            <person name="Numata C."/>
            <person name="Ogawa Y."/>
            <person name="Takayanagi Y."/>
            <person name="Nitta K."/>
        </authorList>
    </citation>
    <scope>NUCLEOTIDE SEQUENCE [MRNA]</scope>
    <scope>PROTEIN SEQUENCE OF 24-71</scope>
</reference>
<reference key="2">
    <citation type="journal article" date="1993" name="Biol. Pharm. Bull.">
        <title>Purification and characterization of Silurus asotus (catfish) roe lectin.</title>
        <authorList>
            <person name="Hosono M."/>
            <person name="Kawauchi H."/>
            <person name="Nitta K."/>
            <person name="Takayanagi Y."/>
            <person name="Shiokawa H."/>
            <person name="Mineki R."/>
            <person name="Murayama K."/>
        </authorList>
    </citation>
    <scope>PROTEIN SEQUENCE OF 24-52</scope>
    <scope>CHARACTERIZATION</scope>
    <source>
        <tissue>Egg</tissue>
    </source>
</reference>
<reference key="3">
    <citation type="journal article" date="1997" name="Anal. Biochem.">
        <title>The structure of Silurus asotus (catfish) roe lectin (SAL): identification of a noncovalent trimer by mass spectrometry and analytical ultracentrifugation.</title>
        <authorList>
            <person name="Murayama K."/>
            <person name="Taka H."/>
            <person name="Kaga N."/>
            <person name="Fujimura T."/>
            <person name="Mineki R."/>
            <person name="Shindo N."/>
            <person name="Morita M."/>
            <person name="Hosono M."/>
            <person name="Nitta K."/>
        </authorList>
    </citation>
    <scope>SUBUNIT</scope>
</reference>
<evidence type="ECO:0000255" key="1">
    <source>
        <dbReference type="PROSITE-ProRule" id="PRU00260"/>
    </source>
</evidence>
<evidence type="ECO:0000269" key="2">
    <source>
    </source>
</evidence>
<evidence type="ECO:0000269" key="3">
    <source>
    </source>
</evidence>
<evidence type="ECO:0000269" key="4">
    <source>
    </source>
</evidence>
<evidence type="ECO:0000305" key="5"/>
<sequence>MMLILKLSLLSLLIATPGLLVSGANMITCYGDVQKLHCETGLIIVKSSLYGRTDSTTCSTNRPPAQVAVTTCSLPITTIGDRCNGLPDCELKTDLLGNTDPCQGTYKYYNTSFDCINGNYAVICEHGYSTLDCGNDAILIVNANYGRASSQICSNGLPNGLTQNTNCYAANTLTTVAGLCNGKKSCTVEALNTIFSDPCSGTVKYLTVTYICTKEMVVCEGGSASINCGAQTIKTIWANYGRTDSTVCSTGRPGSQLLNTNCYTSDTLNKVAAGCDHLSTCTIPANNNFFGDPCPNTYKYLRIVYACV</sequence>
<feature type="signal peptide" evidence="2 3">
    <location>
        <begin position="1"/>
        <end position="23"/>
    </location>
</feature>
<feature type="chain" id="PRO_0000017670" description="Rhamnose-binding lectin">
    <location>
        <begin position="24"/>
        <end position="308"/>
    </location>
</feature>
<feature type="domain" description="SUEL-type lectin 1" evidence="1">
    <location>
        <begin position="27"/>
        <end position="115"/>
    </location>
</feature>
<feature type="domain" description="SUEL-type lectin 2" evidence="1">
    <location>
        <begin position="123"/>
        <end position="213"/>
    </location>
</feature>
<feature type="domain" description="SUEL-type lectin 3" evidence="1">
    <location>
        <begin position="218"/>
        <end position="308"/>
    </location>
</feature>
<feature type="glycosylation site" description="N-linked (GlcNAc...) asparagine" evidence="5">
    <location>
        <position position="110"/>
    </location>
</feature>